<gene>
    <name type="primary">11</name>
</gene>
<comment type="function">
    <text evidence="1">Forms the proximal part of the tail tube.</text>
</comment>
<comment type="subcellular location">
    <subcellularLocation>
        <location evidence="1">Virion</location>
    </subcellularLocation>
    <text evidence="1">Present in 12 copies in the virion.</text>
</comment>
<comment type="similarity">
    <text evidence="3">Belongs to the phi29likevirus proximal tail tube connector protein family.</text>
</comment>
<accession>Q37892</accession>
<sequence length="293" mass="33402">MASYTMKLSTYIEMWSQYETGLSMAEKIEKGRPKLFDFQYPIFDESYRKVFETHFIRNFYMREIGFETEGLFKFNLETWLIINMPYFNKLFESELIKYDPLENTRLNTTGNKKNDTERNDNRDTTGSMKADGKSNTKTSDKTNATGSSKEDGKTTGSVTDDNFNRKIDSDQPDSRLNLTTNDGQGTLEYASAIEENNTNNKRNTTGTNNVTSSAESESTGSGTSDTVTTDNANTTTNDKLNSQINNVEDYIESKIGKSGTQSYASLVQDYRAALLRIEKRIFDEMQELFMLVY</sequence>
<organismHost>
    <name type="scientific">Bacillus subtilis</name>
    <dbReference type="NCBI Taxonomy" id="1423"/>
</organismHost>
<dbReference type="EMBL" id="X99260">
    <property type="protein sequence ID" value="CAA67659.1"/>
    <property type="molecule type" value="Genomic_DNA"/>
</dbReference>
<dbReference type="RefSeq" id="NP_690645.1">
    <property type="nucleotide sequence ID" value="NC_004165.1"/>
</dbReference>
<dbReference type="SMR" id="Q37892"/>
<dbReference type="KEGG" id="vg:955372"/>
<dbReference type="Proteomes" id="UP000000971">
    <property type="component" value="Segment"/>
</dbReference>
<dbReference type="GO" id="GO:0098026">
    <property type="term" value="C:virus tail, tube"/>
    <property type="evidence" value="ECO:0007669"/>
    <property type="project" value="UniProtKB-KW"/>
</dbReference>
<dbReference type="GO" id="GO:0099002">
    <property type="term" value="P:symbiont genome ejection through host cell envelope, short tail mechanism"/>
    <property type="evidence" value="ECO:0007669"/>
    <property type="project" value="UniProtKB-KW"/>
</dbReference>
<proteinExistence type="inferred from homology"/>
<name>TUB11_BPB03</name>
<feature type="chain" id="PRO_0000106588" description="Proximal tail tube connector protein">
    <location>
        <begin position="1"/>
        <end position="293"/>
    </location>
</feature>
<feature type="region of interest" description="Disordered" evidence="2">
    <location>
        <begin position="104"/>
        <end position="240"/>
    </location>
</feature>
<feature type="compositionally biased region" description="Basic and acidic residues" evidence="2">
    <location>
        <begin position="112"/>
        <end position="123"/>
    </location>
</feature>
<feature type="compositionally biased region" description="Basic and acidic residues" evidence="2">
    <location>
        <begin position="130"/>
        <end position="140"/>
    </location>
</feature>
<feature type="compositionally biased region" description="Basic and acidic residues" evidence="2">
    <location>
        <begin position="162"/>
        <end position="173"/>
    </location>
</feature>
<feature type="compositionally biased region" description="Polar residues" evidence="2">
    <location>
        <begin position="174"/>
        <end position="184"/>
    </location>
</feature>
<feature type="compositionally biased region" description="Low complexity" evidence="2">
    <location>
        <begin position="196"/>
        <end position="238"/>
    </location>
</feature>
<protein>
    <recommendedName>
        <fullName evidence="1">Proximal tail tube connector protein</fullName>
    </recommendedName>
    <alternativeName>
        <fullName evidence="1">Gene product 11</fullName>
        <shortName evidence="1">gp11</shortName>
    </alternativeName>
    <alternativeName>
        <fullName evidence="1">Lower collar protein</fullName>
    </alternativeName>
    <alternativeName>
        <fullName evidence="1">Protein p11</fullName>
    </alternativeName>
</protein>
<evidence type="ECO:0000250" key="1">
    <source>
        <dbReference type="UniProtKB" id="P68930"/>
    </source>
</evidence>
<evidence type="ECO:0000256" key="2">
    <source>
        <dbReference type="SAM" id="MobiDB-lite"/>
    </source>
</evidence>
<evidence type="ECO:0000305" key="3"/>
<organism>
    <name type="scientific">Bacillus phage B103</name>
    <name type="common">Bacteriophage B103</name>
    <dbReference type="NCBI Taxonomy" id="2994042"/>
    <lineage>
        <taxon>Viruses</taxon>
        <taxon>Duplodnaviria</taxon>
        <taxon>Heunggongvirae</taxon>
        <taxon>Uroviricota</taxon>
        <taxon>Caudoviricetes</taxon>
        <taxon>Salasmaviridae</taxon>
        <taxon>Picovirinae</taxon>
        <taxon>Beecentumtrevirus</taxon>
        <taxon>Beecentumtrevirus B103</taxon>
    </lineage>
</organism>
<reference key="1">
    <citation type="journal article" date="1997" name="Gene">
        <title>Bacteriophage B103: complete DNA sequence of its genome and relationship to other Bacillus phages.</title>
        <authorList>
            <person name="Pecenkova T."/>
            <person name="Benes V."/>
            <person name="Paces J."/>
            <person name="Vlcek C."/>
            <person name="Paces V."/>
        </authorList>
    </citation>
    <scope>NUCLEOTIDE SEQUENCE [LARGE SCALE GENOMIC DNA]</scope>
</reference>
<keyword id="KW-0426">Late protein</keyword>
<keyword id="KW-1171">Viral genome ejection through host cell envelope</keyword>
<keyword id="KW-1162">Viral penetration into host cytoplasm</keyword>
<keyword id="KW-1244">Viral short tail ejection system</keyword>
<keyword id="KW-1227">Viral tail protein</keyword>
<keyword id="KW-1228">Viral tail tube protein</keyword>
<keyword id="KW-0946">Virion</keyword>
<keyword id="KW-1160">Virus entry into host cell</keyword>